<keyword id="KW-0093">Biotin biosynthesis</keyword>
<keyword id="KW-0963">Cytoplasm</keyword>
<keyword id="KW-0378">Hydrolase</keyword>
<keyword id="KW-0719">Serine esterase</keyword>
<protein>
    <recommendedName>
        <fullName evidence="2">Pimeloyl-[acyl-carrier protein] methyl ester esterase</fullName>
        <ecNumber evidence="2">3.1.1.85</ecNumber>
    </recommendedName>
    <alternativeName>
        <fullName evidence="2">Biotin synthesis protein BioH</fullName>
    </alternativeName>
    <alternativeName>
        <fullName evidence="2">Carboxylesterase BioH</fullName>
    </alternativeName>
</protein>
<proteinExistence type="inferred from homology"/>
<comment type="function">
    <text evidence="2">The physiological role of BioH is to remove the methyl group introduced by BioC when the pimeloyl moiety is complete. It allows to synthesize pimeloyl-ACP via the fatty acid synthetic pathway through the hydrolysis of the ester bonds of pimeloyl-ACP esters.</text>
</comment>
<comment type="catalytic activity">
    <reaction evidence="2">
        <text>6-carboxyhexanoyl-[ACP] methyl ester + H2O = 6-carboxyhexanoyl-[ACP] + methanol + H(+)</text>
        <dbReference type="Rhea" id="RHEA:42700"/>
        <dbReference type="Rhea" id="RHEA-COMP:9955"/>
        <dbReference type="Rhea" id="RHEA-COMP:10186"/>
        <dbReference type="ChEBI" id="CHEBI:15377"/>
        <dbReference type="ChEBI" id="CHEBI:15378"/>
        <dbReference type="ChEBI" id="CHEBI:17790"/>
        <dbReference type="ChEBI" id="CHEBI:78846"/>
        <dbReference type="ChEBI" id="CHEBI:82735"/>
        <dbReference type="EC" id="3.1.1.85"/>
    </reaction>
</comment>
<comment type="pathway">
    <text evidence="2">Cofactor biosynthesis; biotin biosynthesis.</text>
</comment>
<comment type="subunit">
    <text evidence="2">Monomer.</text>
</comment>
<comment type="subcellular location">
    <subcellularLocation>
        <location evidence="2">Cytoplasm</location>
    </subcellularLocation>
</comment>
<comment type="similarity">
    <text evidence="2">Belongs to the AB hydrolase superfamily. Carboxylesterase BioH family.</text>
</comment>
<feature type="chain" id="PRO_1000139991" description="Pimeloyl-[acyl-carrier protein] methyl ester esterase">
    <location>
        <begin position="1"/>
        <end position="256"/>
    </location>
</feature>
<feature type="domain" description="AB hydrolase-1" evidence="1">
    <location>
        <begin position="15"/>
        <end position="242"/>
    </location>
</feature>
<feature type="active site" description="Nucleophile" evidence="2">
    <location>
        <position position="82"/>
    </location>
</feature>
<feature type="active site" evidence="2">
    <location>
        <position position="207"/>
    </location>
</feature>
<feature type="active site" evidence="2">
    <location>
        <position position="235"/>
    </location>
</feature>
<feature type="binding site" evidence="2">
    <location>
        <position position="22"/>
    </location>
    <ligand>
        <name>substrate</name>
    </ligand>
</feature>
<feature type="binding site" evidence="2">
    <location>
        <begin position="82"/>
        <end position="83"/>
    </location>
    <ligand>
        <name>substrate</name>
    </ligand>
</feature>
<feature type="binding site" evidence="2">
    <location>
        <begin position="143"/>
        <end position="147"/>
    </location>
    <ligand>
        <name>substrate</name>
    </ligand>
</feature>
<feature type="binding site" evidence="2">
    <location>
        <position position="235"/>
    </location>
    <ligand>
        <name>substrate</name>
    </ligand>
</feature>
<dbReference type="EC" id="3.1.1.85" evidence="2"/>
<dbReference type="EMBL" id="CU928163">
    <property type="protein sequence ID" value="CAR15017.1"/>
    <property type="molecule type" value="Genomic_DNA"/>
</dbReference>
<dbReference type="RefSeq" id="WP_001060080.1">
    <property type="nucleotide sequence ID" value="NC_011751.1"/>
</dbReference>
<dbReference type="RefSeq" id="YP_002414522.1">
    <property type="nucleotide sequence ID" value="NC_011751.1"/>
</dbReference>
<dbReference type="SMR" id="B7NE17"/>
<dbReference type="STRING" id="585056.ECUMN_3871"/>
<dbReference type="ESTHER" id="ecoli-bioh">
    <property type="family name" value="BioH"/>
</dbReference>
<dbReference type="MEROPS" id="S33.994"/>
<dbReference type="KEGG" id="eum:ECUMN_3871"/>
<dbReference type="PATRIC" id="fig|585056.7.peg.4044"/>
<dbReference type="HOGENOM" id="CLU_020336_12_2_6"/>
<dbReference type="UniPathway" id="UPA00078"/>
<dbReference type="Proteomes" id="UP000007097">
    <property type="component" value="Chromosome"/>
</dbReference>
<dbReference type="GO" id="GO:0005737">
    <property type="term" value="C:cytoplasm"/>
    <property type="evidence" value="ECO:0007669"/>
    <property type="project" value="UniProtKB-SubCell"/>
</dbReference>
<dbReference type="GO" id="GO:0090499">
    <property type="term" value="F:pimelyl-[acyl-carrier protein] methyl ester esterase activity"/>
    <property type="evidence" value="ECO:0007669"/>
    <property type="project" value="UniProtKB-EC"/>
</dbReference>
<dbReference type="GO" id="GO:0009102">
    <property type="term" value="P:biotin biosynthetic process"/>
    <property type="evidence" value="ECO:0007669"/>
    <property type="project" value="UniProtKB-UniRule"/>
</dbReference>
<dbReference type="FunFam" id="3.40.50.1820:FF:000045">
    <property type="entry name" value="Pimeloyl-[acyl-carrier protein] methyl ester esterase"/>
    <property type="match status" value="1"/>
</dbReference>
<dbReference type="Gene3D" id="3.40.50.1820">
    <property type="entry name" value="alpha/beta hydrolase"/>
    <property type="match status" value="1"/>
</dbReference>
<dbReference type="HAMAP" id="MF_01260">
    <property type="entry name" value="Carboxylester"/>
    <property type="match status" value="1"/>
</dbReference>
<dbReference type="InterPro" id="IPR000073">
    <property type="entry name" value="AB_hydrolase_1"/>
</dbReference>
<dbReference type="InterPro" id="IPR029058">
    <property type="entry name" value="AB_hydrolase_fold"/>
</dbReference>
<dbReference type="InterPro" id="IPR010076">
    <property type="entry name" value="BioH"/>
</dbReference>
<dbReference type="InterPro" id="IPR050228">
    <property type="entry name" value="Carboxylesterase_BioH"/>
</dbReference>
<dbReference type="NCBIfam" id="TIGR01738">
    <property type="entry name" value="bioH"/>
    <property type="match status" value="1"/>
</dbReference>
<dbReference type="NCBIfam" id="NF007674">
    <property type="entry name" value="PRK10349.1"/>
    <property type="match status" value="1"/>
</dbReference>
<dbReference type="PANTHER" id="PTHR43194">
    <property type="entry name" value="HYDROLASE ALPHA/BETA FOLD FAMILY"/>
    <property type="match status" value="1"/>
</dbReference>
<dbReference type="PANTHER" id="PTHR43194:SF5">
    <property type="entry name" value="PIMELOYL-[ACYL-CARRIER PROTEIN] METHYL ESTER ESTERASE"/>
    <property type="match status" value="1"/>
</dbReference>
<dbReference type="Pfam" id="PF00561">
    <property type="entry name" value="Abhydrolase_1"/>
    <property type="match status" value="1"/>
</dbReference>
<dbReference type="SUPFAM" id="SSF53474">
    <property type="entry name" value="alpha/beta-Hydrolases"/>
    <property type="match status" value="1"/>
</dbReference>
<gene>
    <name evidence="2" type="primary">bioH</name>
    <name type="ordered locus">ECUMN_3871</name>
</gene>
<name>BIOH_ECOLU</name>
<accession>B7NE17</accession>
<evidence type="ECO:0000255" key="1"/>
<evidence type="ECO:0000255" key="2">
    <source>
        <dbReference type="HAMAP-Rule" id="MF_01260"/>
    </source>
</evidence>
<sequence>MNNIWWQTKGQGNVHLVLLHGWGLNAEVWRCIDEELSSHFTLHLVDLPGFGRSRGFGALSLADMAEAVLRQAPDKAIWLGWSLGGLVASQIALTHPERVQALVTVASSPCFSARDEWPGIKPDVLAGFQQQLSDDFQRTVERFLALQTMGTETARQDARALKKTVLALPMPEVDVLNGGLEILKTVDLRQPLQNVSMPFLRLYGYLDGLVPRKVVPMLDKLWPHSESYIFAKAAHAPFISHPAEFCRMLVALKQRV</sequence>
<organism>
    <name type="scientific">Escherichia coli O17:K52:H18 (strain UMN026 / ExPEC)</name>
    <dbReference type="NCBI Taxonomy" id="585056"/>
    <lineage>
        <taxon>Bacteria</taxon>
        <taxon>Pseudomonadati</taxon>
        <taxon>Pseudomonadota</taxon>
        <taxon>Gammaproteobacteria</taxon>
        <taxon>Enterobacterales</taxon>
        <taxon>Enterobacteriaceae</taxon>
        <taxon>Escherichia</taxon>
    </lineage>
</organism>
<reference key="1">
    <citation type="journal article" date="2009" name="PLoS Genet.">
        <title>Organised genome dynamics in the Escherichia coli species results in highly diverse adaptive paths.</title>
        <authorList>
            <person name="Touchon M."/>
            <person name="Hoede C."/>
            <person name="Tenaillon O."/>
            <person name="Barbe V."/>
            <person name="Baeriswyl S."/>
            <person name="Bidet P."/>
            <person name="Bingen E."/>
            <person name="Bonacorsi S."/>
            <person name="Bouchier C."/>
            <person name="Bouvet O."/>
            <person name="Calteau A."/>
            <person name="Chiapello H."/>
            <person name="Clermont O."/>
            <person name="Cruveiller S."/>
            <person name="Danchin A."/>
            <person name="Diard M."/>
            <person name="Dossat C."/>
            <person name="Karoui M.E."/>
            <person name="Frapy E."/>
            <person name="Garry L."/>
            <person name="Ghigo J.M."/>
            <person name="Gilles A.M."/>
            <person name="Johnson J."/>
            <person name="Le Bouguenec C."/>
            <person name="Lescat M."/>
            <person name="Mangenot S."/>
            <person name="Martinez-Jehanne V."/>
            <person name="Matic I."/>
            <person name="Nassif X."/>
            <person name="Oztas S."/>
            <person name="Petit M.A."/>
            <person name="Pichon C."/>
            <person name="Rouy Z."/>
            <person name="Ruf C.S."/>
            <person name="Schneider D."/>
            <person name="Tourret J."/>
            <person name="Vacherie B."/>
            <person name="Vallenet D."/>
            <person name="Medigue C."/>
            <person name="Rocha E.P.C."/>
            <person name="Denamur E."/>
        </authorList>
    </citation>
    <scope>NUCLEOTIDE SEQUENCE [LARGE SCALE GENOMIC DNA]</scope>
    <source>
        <strain>UMN026 / ExPEC</strain>
    </source>
</reference>